<proteinExistence type="inferred from homology"/>
<name>RL35_LEUMM</name>
<keyword id="KW-1185">Reference proteome</keyword>
<keyword id="KW-0687">Ribonucleoprotein</keyword>
<keyword id="KW-0689">Ribosomal protein</keyword>
<organism>
    <name type="scientific">Leuconostoc mesenteroides subsp. mesenteroides (strain ATCC 8293 / DSM 20343 / BCRC 11652 / CCM 1803 / JCM 6124 / NCDO 523 / NBRC 100496 / NCIMB 8023 / NCTC 12954 / NRRL B-1118 / 37Y)</name>
    <dbReference type="NCBI Taxonomy" id="203120"/>
    <lineage>
        <taxon>Bacteria</taxon>
        <taxon>Bacillati</taxon>
        <taxon>Bacillota</taxon>
        <taxon>Bacilli</taxon>
        <taxon>Lactobacillales</taxon>
        <taxon>Lactobacillaceae</taxon>
        <taxon>Leuconostoc</taxon>
    </lineage>
</organism>
<accession>Q03W87</accession>
<gene>
    <name evidence="1" type="primary">rpmI</name>
    <name type="ordered locus">LEUM_1442</name>
</gene>
<protein>
    <recommendedName>
        <fullName evidence="1">Large ribosomal subunit protein bL35</fullName>
    </recommendedName>
    <alternativeName>
        <fullName evidence="3">50S ribosomal protein L35</fullName>
    </alternativeName>
</protein>
<sequence>MPKMKTHRASAKRFKKTANGGLKSASAYTSHRFHGKTKKQRRQLRGTRMMDSTTVKTYAKMLSTL</sequence>
<dbReference type="EMBL" id="CP000414">
    <property type="protein sequence ID" value="ABJ62535.1"/>
    <property type="molecule type" value="Genomic_DNA"/>
</dbReference>
<dbReference type="RefSeq" id="WP_002815120.1">
    <property type="nucleotide sequence ID" value="NC_008531.1"/>
</dbReference>
<dbReference type="SMR" id="Q03W87"/>
<dbReference type="EnsemblBacteria" id="ABJ62535">
    <property type="protein sequence ID" value="ABJ62535"/>
    <property type="gene ID" value="LEUM_1442"/>
</dbReference>
<dbReference type="GeneID" id="97503585"/>
<dbReference type="KEGG" id="lme:LEUM_1442"/>
<dbReference type="eggNOG" id="COG0291">
    <property type="taxonomic scope" value="Bacteria"/>
</dbReference>
<dbReference type="HOGENOM" id="CLU_169643_3_1_9"/>
<dbReference type="Proteomes" id="UP000000362">
    <property type="component" value="Chromosome"/>
</dbReference>
<dbReference type="GO" id="GO:0022625">
    <property type="term" value="C:cytosolic large ribosomal subunit"/>
    <property type="evidence" value="ECO:0007669"/>
    <property type="project" value="TreeGrafter"/>
</dbReference>
<dbReference type="GO" id="GO:0003735">
    <property type="term" value="F:structural constituent of ribosome"/>
    <property type="evidence" value="ECO:0007669"/>
    <property type="project" value="InterPro"/>
</dbReference>
<dbReference type="GO" id="GO:0006412">
    <property type="term" value="P:translation"/>
    <property type="evidence" value="ECO:0007669"/>
    <property type="project" value="UniProtKB-UniRule"/>
</dbReference>
<dbReference type="FunFam" id="4.10.410.60:FF:000001">
    <property type="entry name" value="50S ribosomal protein L35"/>
    <property type="match status" value="1"/>
</dbReference>
<dbReference type="Gene3D" id="4.10.410.60">
    <property type="match status" value="1"/>
</dbReference>
<dbReference type="HAMAP" id="MF_00514">
    <property type="entry name" value="Ribosomal_bL35"/>
    <property type="match status" value="1"/>
</dbReference>
<dbReference type="InterPro" id="IPR001706">
    <property type="entry name" value="Ribosomal_bL35"/>
</dbReference>
<dbReference type="InterPro" id="IPR021137">
    <property type="entry name" value="Ribosomal_bL35-like"/>
</dbReference>
<dbReference type="InterPro" id="IPR018265">
    <property type="entry name" value="Ribosomal_bL35_CS"/>
</dbReference>
<dbReference type="InterPro" id="IPR037229">
    <property type="entry name" value="Ribosomal_bL35_sf"/>
</dbReference>
<dbReference type="NCBIfam" id="TIGR00001">
    <property type="entry name" value="rpmI_bact"/>
    <property type="match status" value="1"/>
</dbReference>
<dbReference type="PANTHER" id="PTHR33343">
    <property type="entry name" value="54S RIBOSOMAL PROTEIN BL35M"/>
    <property type="match status" value="1"/>
</dbReference>
<dbReference type="PANTHER" id="PTHR33343:SF1">
    <property type="entry name" value="LARGE RIBOSOMAL SUBUNIT PROTEIN BL35M"/>
    <property type="match status" value="1"/>
</dbReference>
<dbReference type="Pfam" id="PF01632">
    <property type="entry name" value="Ribosomal_L35p"/>
    <property type="match status" value="1"/>
</dbReference>
<dbReference type="PRINTS" id="PR00064">
    <property type="entry name" value="RIBOSOMALL35"/>
</dbReference>
<dbReference type="SUPFAM" id="SSF143034">
    <property type="entry name" value="L35p-like"/>
    <property type="match status" value="1"/>
</dbReference>
<dbReference type="PROSITE" id="PS00936">
    <property type="entry name" value="RIBOSOMAL_L35"/>
    <property type="match status" value="1"/>
</dbReference>
<feature type="chain" id="PRO_1000050711" description="Large ribosomal subunit protein bL35">
    <location>
        <begin position="1"/>
        <end position="65"/>
    </location>
</feature>
<feature type="region of interest" description="Disordered" evidence="2">
    <location>
        <begin position="1"/>
        <end position="24"/>
    </location>
</feature>
<feature type="compositionally biased region" description="Basic residues" evidence="2">
    <location>
        <begin position="1"/>
        <end position="16"/>
    </location>
</feature>
<evidence type="ECO:0000255" key="1">
    <source>
        <dbReference type="HAMAP-Rule" id="MF_00514"/>
    </source>
</evidence>
<evidence type="ECO:0000256" key="2">
    <source>
        <dbReference type="SAM" id="MobiDB-lite"/>
    </source>
</evidence>
<evidence type="ECO:0000305" key="3"/>
<reference key="1">
    <citation type="journal article" date="2006" name="Proc. Natl. Acad. Sci. U.S.A.">
        <title>Comparative genomics of the lactic acid bacteria.</title>
        <authorList>
            <person name="Makarova K.S."/>
            <person name="Slesarev A."/>
            <person name="Wolf Y.I."/>
            <person name="Sorokin A."/>
            <person name="Mirkin B."/>
            <person name="Koonin E.V."/>
            <person name="Pavlov A."/>
            <person name="Pavlova N."/>
            <person name="Karamychev V."/>
            <person name="Polouchine N."/>
            <person name="Shakhova V."/>
            <person name="Grigoriev I."/>
            <person name="Lou Y."/>
            <person name="Rohksar D."/>
            <person name="Lucas S."/>
            <person name="Huang K."/>
            <person name="Goodstein D.M."/>
            <person name="Hawkins T."/>
            <person name="Plengvidhya V."/>
            <person name="Welker D."/>
            <person name="Hughes J."/>
            <person name="Goh Y."/>
            <person name="Benson A."/>
            <person name="Baldwin K."/>
            <person name="Lee J.-H."/>
            <person name="Diaz-Muniz I."/>
            <person name="Dosti B."/>
            <person name="Smeianov V."/>
            <person name="Wechter W."/>
            <person name="Barabote R."/>
            <person name="Lorca G."/>
            <person name="Altermann E."/>
            <person name="Barrangou R."/>
            <person name="Ganesan B."/>
            <person name="Xie Y."/>
            <person name="Rawsthorne H."/>
            <person name="Tamir D."/>
            <person name="Parker C."/>
            <person name="Breidt F."/>
            <person name="Broadbent J.R."/>
            <person name="Hutkins R."/>
            <person name="O'Sullivan D."/>
            <person name="Steele J."/>
            <person name="Unlu G."/>
            <person name="Saier M.H. Jr."/>
            <person name="Klaenhammer T."/>
            <person name="Richardson P."/>
            <person name="Kozyavkin S."/>
            <person name="Weimer B.C."/>
            <person name="Mills D.A."/>
        </authorList>
    </citation>
    <scope>NUCLEOTIDE SEQUENCE [LARGE SCALE GENOMIC DNA]</scope>
    <source>
        <strain>ATCC 8293 / DSM 20343 / BCRC 11652 / CCM 1803 / JCM 6124 / NCDO 523 / NBRC 100496 / NCIMB 8023 / NCTC 12954 / NRRL B-1118 / 37Y</strain>
    </source>
</reference>
<comment type="similarity">
    <text evidence="1">Belongs to the bacterial ribosomal protein bL35 family.</text>
</comment>